<proteinExistence type="evidence at protein level"/>
<reference key="1">
    <citation type="journal article" date="1997" name="Nature">
        <title>The complete genome sequence of the Gram-positive bacterium Bacillus subtilis.</title>
        <authorList>
            <person name="Kunst F."/>
            <person name="Ogasawara N."/>
            <person name="Moszer I."/>
            <person name="Albertini A.M."/>
            <person name="Alloni G."/>
            <person name="Azevedo V."/>
            <person name="Bertero M.G."/>
            <person name="Bessieres P."/>
            <person name="Bolotin A."/>
            <person name="Borchert S."/>
            <person name="Borriss R."/>
            <person name="Boursier L."/>
            <person name="Brans A."/>
            <person name="Braun M."/>
            <person name="Brignell S.C."/>
            <person name="Bron S."/>
            <person name="Brouillet S."/>
            <person name="Bruschi C.V."/>
            <person name="Caldwell B."/>
            <person name="Capuano V."/>
            <person name="Carter N.M."/>
            <person name="Choi S.-K."/>
            <person name="Codani J.-J."/>
            <person name="Connerton I.F."/>
            <person name="Cummings N.J."/>
            <person name="Daniel R.A."/>
            <person name="Denizot F."/>
            <person name="Devine K.M."/>
            <person name="Duesterhoeft A."/>
            <person name="Ehrlich S.D."/>
            <person name="Emmerson P.T."/>
            <person name="Entian K.-D."/>
            <person name="Errington J."/>
            <person name="Fabret C."/>
            <person name="Ferrari E."/>
            <person name="Foulger D."/>
            <person name="Fritz C."/>
            <person name="Fujita M."/>
            <person name="Fujita Y."/>
            <person name="Fuma S."/>
            <person name="Galizzi A."/>
            <person name="Galleron N."/>
            <person name="Ghim S.-Y."/>
            <person name="Glaser P."/>
            <person name="Goffeau A."/>
            <person name="Golightly E.J."/>
            <person name="Grandi G."/>
            <person name="Guiseppi G."/>
            <person name="Guy B.J."/>
            <person name="Haga K."/>
            <person name="Haiech J."/>
            <person name="Harwood C.R."/>
            <person name="Henaut A."/>
            <person name="Hilbert H."/>
            <person name="Holsappel S."/>
            <person name="Hosono S."/>
            <person name="Hullo M.-F."/>
            <person name="Itaya M."/>
            <person name="Jones L.-M."/>
            <person name="Joris B."/>
            <person name="Karamata D."/>
            <person name="Kasahara Y."/>
            <person name="Klaerr-Blanchard M."/>
            <person name="Klein C."/>
            <person name="Kobayashi Y."/>
            <person name="Koetter P."/>
            <person name="Koningstein G."/>
            <person name="Krogh S."/>
            <person name="Kumano M."/>
            <person name="Kurita K."/>
            <person name="Lapidus A."/>
            <person name="Lardinois S."/>
            <person name="Lauber J."/>
            <person name="Lazarevic V."/>
            <person name="Lee S.-M."/>
            <person name="Levine A."/>
            <person name="Liu H."/>
            <person name="Masuda S."/>
            <person name="Mauel C."/>
            <person name="Medigue C."/>
            <person name="Medina N."/>
            <person name="Mellado R.P."/>
            <person name="Mizuno M."/>
            <person name="Moestl D."/>
            <person name="Nakai S."/>
            <person name="Noback M."/>
            <person name="Noone D."/>
            <person name="O'Reilly M."/>
            <person name="Ogawa K."/>
            <person name="Ogiwara A."/>
            <person name="Oudega B."/>
            <person name="Park S.-H."/>
            <person name="Parro V."/>
            <person name="Pohl T.M."/>
            <person name="Portetelle D."/>
            <person name="Porwollik S."/>
            <person name="Prescott A.M."/>
            <person name="Presecan E."/>
            <person name="Pujic P."/>
            <person name="Purnelle B."/>
            <person name="Rapoport G."/>
            <person name="Rey M."/>
            <person name="Reynolds S."/>
            <person name="Rieger M."/>
            <person name="Rivolta C."/>
            <person name="Rocha E."/>
            <person name="Roche B."/>
            <person name="Rose M."/>
            <person name="Sadaie Y."/>
            <person name="Sato T."/>
            <person name="Scanlan E."/>
            <person name="Schleich S."/>
            <person name="Schroeter R."/>
            <person name="Scoffone F."/>
            <person name="Sekiguchi J."/>
            <person name="Sekowska A."/>
            <person name="Seror S.J."/>
            <person name="Serror P."/>
            <person name="Shin B.-S."/>
            <person name="Soldo B."/>
            <person name="Sorokin A."/>
            <person name="Tacconi E."/>
            <person name="Takagi T."/>
            <person name="Takahashi H."/>
            <person name="Takemaru K."/>
            <person name="Takeuchi M."/>
            <person name="Tamakoshi A."/>
            <person name="Tanaka T."/>
            <person name="Terpstra P."/>
            <person name="Tognoni A."/>
            <person name="Tosato V."/>
            <person name="Uchiyama S."/>
            <person name="Vandenbol M."/>
            <person name="Vannier F."/>
            <person name="Vassarotti A."/>
            <person name="Viari A."/>
            <person name="Wambutt R."/>
            <person name="Wedler E."/>
            <person name="Wedler H."/>
            <person name="Weitzenegger T."/>
            <person name="Winters P."/>
            <person name="Wipat A."/>
            <person name="Yamamoto H."/>
            <person name="Yamane K."/>
            <person name="Yasumoto K."/>
            <person name="Yata K."/>
            <person name="Yoshida K."/>
            <person name="Yoshikawa H.-F."/>
            <person name="Zumstein E."/>
            <person name="Yoshikawa H."/>
            <person name="Danchin A."/>
        </authorList>
    </citation>
    <scope>NUCLEOTIDE SEQUENCE [LARGE SCALE GENOMIC DNA]</scope>
    <source>
        <strain>168</strain>
    </source>
</reference>
<reference key="2">
    <citation type="journal article" date="2006" name="J. Mol. Biol.">
        <title>A novel glycoside hydrolase family 105: the structure of family 105 unsaturated rhamnogalacturonyl hydrolase complexed with a disaccharide in comparison with family 88 enzyme complexed with the disaccharide.</title>
        <authorList>
            <person name="Itoh T."/>
            <person name="Ochiai A."/>
            <person name="Mikami B."/>
            <person name="Hashimoto W."/>
            <person name="Murata K."/>
        </authorList>
    </citation>
    <scope>PROTEIN SEQUENCE OF 2-6</scope>
    <scope>FUNCTION</scope>
    <scope>MUTAGENESIS OF ASP-135</scope>
    <scope>BIOPHYSICOCHEMICAL PROPERTIES</scope>
    <scope>SUBUNIT</scope>
</reference>
<reference key="3">
    <citation type="journal article" date="2007" name="Appl. Environ. Microbiol.">
        <title>Plant cell wall degradation by saprophytic Bacillus subtilis strains: gene clusters responsible for rhamnogalacturonan depolymerization.</title>
        <authorList>
            <person name="Ochiai A."/>
            <person name="Itoh T."/>
            <person name="Kawamata A."/>
            <person name="Hashimoto W."/>
            <person name="Murata K."/>
        </authorList>
    </citation>
    <scope>INDUCTION</scope>
</reference>
<keyword id="KW-0963">Cytoplasm</keyword>
<keyword id="KW-0903">Direct protein sequencing</keyword>
<keyword id="KW-0326">Glycosidase</keyword>
<keyword id="KW-0378">Hydrolase</keyword>
<keyword id="KW-1185">Reference proteome</keyword>
<dbReference type="EC" id="3.2.1.172"/>
<dbReference type="EMBL" id="AL009126">
    <property type="protein sequence ID" value="CAB12519.1"/>
    <property type="molecule type" value="Genomic_DNA"/>
</dbReference>
<dbReference type="PIR" id="A69797">
    <property type="entry name" value="A69797"/>
</dbReference>
<dbReference type="RefSeq" id="WP_003243366.1">
    <property type="nucleotide sequence ID" value="NZ_OZ025638.1"/>
</dbReference>
<dbReference type="SMR" id="O31521"/>
<dbReference type="FunCoup" id="O31521">
    <property type="interactions" value="95"/>
</dbReference>
<dbReference type="STRING" id="224308.BSU07000"/>
<dbReference type="CAZy" id="GH105">
    <property type="family name" value="Glycoside Hydrolase Family 105"/>
</dbReference>
<dbReference type="PaxDb" id="224308-BSU07000"/>
<dbReference type="DNASU" id="938759"/>
<dbReference type="EnsemblBacteria" id="CAB12519">
    <property type="protein sequence ID" value="CAB12519"/>
    <property type="gene ID" value="BSU_07000"/>
</dbReference>
<dbReference type="GeneID" id="938759"/>
<dbReference type="KEGG" id="bsu:BSU07000"/>
<dbReference type="PATRIC" id="fig|224308.179.peg.760"/>
<dbReference type="eggNOG" id="COG4225">
    <property type="taxonomic scope" value="Bacteria"/>
</dbReference>
<dbReference type="InParanoid" id="O31521"/>
<dbReference type="OrthoDB" id="9812931at2"/>
<dbReference type="PhylomeDB" id="O31521"/>
<dbReference type="BioCyc" id="BSUB:BSU07000-MONOMER"/>
<dbReference type="BioCyc" id="MetaCyc:BSU07000-MONOMER"/>
<dbReference type="BRENDA" id="3.2.1.172">
    <property type="organism ID" value="658"/>
</dbReference>
<dbReference type="Proteomes" id="UP000001570">
    <property type="component" value="Chromosome"/>
</dbReference>
<dbReference type="GO" id="GO:0005737">
    <property type="term" value="C:cytoplasm"/>
    <property type="evidence" value="ECO:0007669"/>
    <property type="project" value="UniProtKB-SubCell"/>
</dbReference>
<dbReference type="GO" id="GO:0102211">
    <property type="term" value="F:unsaturated rhamnogalacturonyl hydrolase activity"/>
    <property type="evidence" value="ECO:0007669"/>
    <property type="project" value="UniProtKB-EC"/>
</dbReference>
<dbReference type="GO" id="GO:0005975">
    <property type="term" value="P:carbohydrate metabolic process"/>
    <property type="evidence" value="ECO:0007669"/>
    <property type="project" value="InterPro"/>
</dbReference>
<dbReference type="Gene3D" id="1.50.10.10">
    <property type="match status" value="1"/>
</dbReference>
<dbReference type="InterPro" id="IPR008928">
    <property type="entry name" value="6-hairpin_glycosidase_sf"/>
</dbReference>
<dbReference type="InterPro" id="IPR012341">
    <property type="entry name" value="6hp_glycosidase-like_sf"/>
</dbReference>
<dbReference type="InterPro" id="IPR010905">
    <property type="entry name" value="Glyco_hydro_88"/>
</dbReference>
<dbReference type="InterPro" id="IPR052043">
    <property type="entry name" value="PolySaccharide_Degr_Enz"/>
</dbReference>
<dbReference type="PANTHER" id="PTHR33886">
    <property type="entry name" value="UNSATURATED RHAMNOGALACTURONAN HYDROLASE (EUROFUNG)"/>
    <property type="match status" value="1"/>
</dbReference>
<dbReference type="PANTHER" id="PTHR33886:SF8">
    <property type="entry name" value="UNSATURATED RHAMNOGALACTURONAN HYDROLASE (EUROFUNG)"/>
    <property type="match status" value="1"/>
</dbReference>
<dbReference type="Pfam" id="PF07470">
    <property type="entry name" value="Glyco_hydro_88"/>
    <property type="match status" value="1"/>
</dbReference>
<dbReference type="SUPFAM" id="SSF48208">
    <property type="entry name" value="Six-hairpin glycosidases"/>
    <property type="match status" value="1"/>
</dbReference>
<evidence type="ECO:0000250" key="1"/>
<evidence type="ECO:0000269" key="2">
    <source>
    </source>
</evidence>
<evidence type="ECO:0000269" key="3">
    <source>
    </source>
</evidence>
<evidence type="ECO:0000305" key="4"/>
<protein>
    <recommendedName>
        <fullName>Unsaturated rhamnogalacturonyl hydrolase YesR</fullName>
        <shortName>URH</shortName>
        <ecNumber>3.2.1.172</ecNumber>
    </recommendedName>
</protein>
<accession>O31521</accession>
<organism>
    <name type="scientific">Bacillus subtilis (strain 168)</name>
    <dbReference type="NCBI Taxonomy" id="224308"/>
    <lineage>
        <taxon>Bacteria</taxon>
        <taxon>Bacillati</taxon>
        <taxon>Bacillota</taxon>
        <taxon>Bacilli</taxon>
        <taxon>Bacillales</taxon>
        <taxon>Bacillaceae</taxon>
        <taxon>Bacillus</taxon>
    </lineage>
</organism>
<name>URHG1_BACSU</name>
<comment type="function">
    <text evidence="2">Catalyzes the hydrolysis of unsaturated rhamnogalacturonan disaccharide to yield unsaturated D-galacturonic acid and L-rhamnose. It cannot act on unsaturated glucuronyl hydrolase (UGL) substrates containing unsaturated D-glucuronic acid at the non-reducing terminus, although the active pockets of YesR and UGL are very similar.</text>
</comment>
<comment type="catalytic activity">
    <reaction>
        <text>2-O-(4-deoxy-beta-L-threo-hex-4-enopyranuronosyl)-alpha-L-rhamnose + H2O = 5-dehydro-4-deoxy-D-glucuronate + L-rhamnopyranose</text>
        <dbReference type="Rhea" id="RHEA:30927"/>
        <dbReference type="ChEBI" id="CHEBI:15377"/>
        <dbReference type="ChEBI" id="CHEBI:17117"/>
        <dbReference type="ChEBI" id="CHEBI:62346"/>
        <dbReference type="ChEBI" id="CHEBI:62478"/>
        <dbReference type="EC" id="3.2.1.172"/>
    </reaction>
</comment>
<comment type="biophysicochemical properties">
    <kinetics>
        <KM evidence="2">719 uM for unsaturated rhamnogalacturonan disaccharide (at pH 6 and 30 degrees Celsius)</KM>
    </kinetics>
    <phDependence>
        <text evidence="2">Optimum pH is 6.0.</text>
    </phDependence>
    <temperatureDependence>
        <text evidence="2">Optimum temperature is 50 degrees Celsius. It is stable below 50 degrees Celsius.</text>
    </temperatureDependence>
</comment>
<comment type="subunit">
    <text evidence="2">Monomer.</text>
</comment>
<comment type="subcellular location">
    <subcellularLocation>
        <location evidence="1">Cytoplasm</location>
    </subcellularLocation>
</comment>
<comment type="induction">
    <text evidence="3">Up-regulated by growth on type I rhamnogalacturonan.</text>
</comment>
<comment type="similarity">
    <text evidence="4">Belongs to the glycosyl hydrolase 105 family.</text>
</comment>
<gene>
    <name type="primary">yesR</name>
    <name type="ordered locus">BSU07000</name>
</gene>
<feature type="initiator methionine" description="Removed" evidence="2">
    <location>
        <position position="1"/>
    </location>
</feature>
<feature type="chain" id="PRO_0000364434" description="Unsaturated rhamnogalacturonyl hydrolase YesR">
    <location>
        <begin position="2"/>
        <end position="344"/>
    </location>
</feature>
<feature type="active site" description="Proton donor" evidence="4">
    <location>
        <position position="135"/>
    </location>
</feature>
<feature type="binding site" evidence="1">
    <location>
        <begin position="30"/>
        <end position="31"/>
    </location>
    <ligand>
        <name>substrate</name>
    </ligand>
</feature>
<feature type="binding site" evidence="1">
    <location>
        <position position="74"/>
    </location>
    <ligand>
        <name>substrate</name>
    </ligand>
</feature>
<feature type="binding site" evidence="1">
    <location>
        <begin position="118"/>
        <end position="128"/>
    </location>
    <ligand>
        <name>substrate</name>
    </ligand>
</feature>
<feature type="binding site" evidence="1">
    <location>
        <begin position="198"/>
        <end position="202"/>
    </location>
    <ligand>
        <name>substrate</name>
    </ligand>
</feature>
<feature type="binding site" evidence="1">
    <location>
        <begin position="308"/>
        <end position="309"/>
    </location>
    <ligand>
        <name>substrate</name>
    </ligand>
</feature>
<feature type="site" description="May be essential to modulate pKa of the D-135 carboxyl group" evidence="1">
    <location>
        <position position="31"/>
    </location>
</feature>
<feature type="site" description="May be essential to modulate pKa of the D-135 carboxyl group" evidence="1">
    <location>
        <position position="74"/>
    </location>
</feature>
<feature type="mutagenesis site" description="Loss of hydrolase activity." evidence="2">
    <original>D</original>
    <variation>N</variation>
    <location>
        <position position="135"/>
    </location>
</feature>
<sequence length="344" mass="38677">MAQLIFDEEKVTSVIDRIVKRTFQMDFAWDWPGGVAFYGVAEAYEATENEEYINLLKTWVDEQLEDGLPPLSINGVSIGHTLLFLHKVTGDDVYLETAAEMAEYVLHKAPRFGEGILQHTVNAAEYVFPEQAWADTLMMAGLFMLRIGRVMEREDYFEDGLRQFHGHEDVLQDPVTNLYYHAWDNKAQNHLSGIYWGRANGWAALTMAKALPLIEVTHPSFMIIDGSLRDQLSALVRLQDESGLWHTILDDPDSYLEVSASAGIASALMSSGKLYTKYVQKSLAAILDAVEEDGRVSRVSAGTAVMKNAEGYKQVPYKRIQGWGQGLALTFLADVLKTKKRLYQ</sequence>